<reference key="1">
    <citation type="journal article" date="1997" name="Nature">
        <title>Molecular basis of symbiosis between Rhizobium and legumes.</title>
        <authorList>
            <person name="Freiberg C.A."/>
            <person name="Fellay R."/>
            <person name="Bairoch A."/>
            <person name="Broughton W.J."/>
            <person name="Rosenthal A."/>
            <person name="Perret X."/>
        </authorList>
    </citation>
    <scope>NUCLEOTIDE SEQUENCE [LARGE SCALE GENOMIC DNA]</scope>
    <source>
        <strain>NBRC 101917 / NGR234</strain>
    </source>
</reference>
<reference key="2">
    <citation type="journal article" date="2009" name="Appl. Environ. Microbiol.">
        <title>Rhizobium sp. strain NGR234 possesses a remarkable number of secretion systems.</title>
        <authorList>
            <person name="Schmeisser C."/>
            <person name="Liesegang H."/>
            <person name="Krysciak D."/>
            <person name="Bakkou N."/>
            <person name="Le Quere A."/>
            <person name="Wollherr A."/>
            <person name="Heinemeyer I."/>
            <person name="Morgenstern B."/>
            <person name="Pommerening-Roeser A."/>
            <person name="Flores M."/>
            <person name="Palacios R."/>
            <person name="Brenner S."/>
            <person name="Gottschalk G."/>
            <person name="Schmitz R.A."/>
            <person name="Broughton W.J."/>
            <person name="Perret X."/>
            <person name="Strittmatter A.W."/>
            <person name="Streit W.R."/>
        </authorList>
    </citation>
    <scope>NUCLEOTIDE SEQUENCE [LARGE SCALE GENOMIC DNA]</scope>
    <source>
        <strain>NBRC 101917 / NGR234</strain>
    </source>
</reference>
<keyword id="KW-0233">DNA recombination</keyword>
<keyword id="KW-0238">DNA-binding</keyword>
<keyword id="KW-0614">Plasmid</keyword>
<keyword id="KW-1185">Reference proteome</keyword>
<keyword id="KW-0814">Transposable element</keyword>
<keyword id="KW-0815">Transposition</keyword>
<geneLocation type="plasmid">
    <name>sym pNGR234a</name>
</geneLocation>
<name>Y4QE_SINFN</name>
<proteinExistence type="inferred from homology"/>
<sequence>MSFFGSEVARPRLFFRGLLGQAGPILITGGRAVADYREAFVGIDVAKLKNAIAVAESGRNGEVRYWGEVEASDAGIRRAIKQITAKFEHVYFCYEAGPTGYGLYRLIRSLGHECIVVAPSLIPRKPGDRVKTNRRDAISLARLLRAGELTAVWVPDEDHEAMRDLVRARTSAVETLRTHRQQVNAFMLKHGRIYPGKRSWTMRYLRWLQEQHFDHPAHQIALQEMVETVIAEFVPHWSLAAVVCALRALRGVDLIAAVTFATEVGDAGRFESPRQLMGYLGLVPGERSTGETTKRIGITKAGNSRVRTLLVECAWTYRYPPRIGKRKLYRLEEVSSSVREIAWKAQTRLTARYRMLSARGKKSTVVCTAVARELAGFMWAIAREARQTTS</sequence>
<dbReference type="EMBL" id="U00090">
    <property type="protein sequence ID" value="AAB91829.1"/>
    <property type="molecule type" value="Genomic_DNA"/>
</dbReference>
<dbReference type="RefSeq" id="NP_444032.1">
    <property type="nucleotide sequence ID" value="NC_000914.2"/>
</dbReference>
<dbReference type="SMR" id="P55626"/>
<dbReference type="KEGG" id="rhi:NGR_a01930"/>
<dbReference type="PATRIC" id="fig|394.7.peg.194"/>
<dbReference type="eggNOG" id="COG3547">
    <property type="taxonomic scope" value="Bacteria"/>
</dbReference>
<dbReference type="HOGENOM" id="CLU_036902_1_1_5"/>
<dbReference type="OrthoDB" id="8261795at2"/>
<dbReference type="Proteomes" id="UP000001054">
    <property type="component" value="Plasmid pNGR234a"/>
</dbReference>
<dbReference type="GO" id="GO:0003677">
    <property type="term" value="F:DNA binding"/>
    <property type="evidence" value="ECO:0007669"/>
    <property type="project" value="UniProtKB-KW"/>
</dbReference>
<dbReference type="GO" id="GO:0004803">
    <property type="term" value="F:transposase activity"/>
    <property type="evidence" value="ECO:0007669"/>
    <property type="project" value="InterPro"/>
</dbReference>
<dbReference type="GO" id="GO:0006313">
    <property type="term" value="P:DNA transposition"/>
    <property type="evidence" value="ECO:0007669"/>
    <property type="project" value="InterPro"/>
</dbReference>
<dbReference type="InterPro" id="IPR002525">
    <property type="entry name" value="Transp_IS110-like_N"/>
</dbReference>
<dbReference type="InterPro" id="IPR047650">
    <property type="entry name" value="Transpos_IS110"/>
</dbReference>
<dbReference type="InterPro" id="IPR003346">
    <property type="entry name" value="Transposase_20"/>
</dbReference>
<dbReference type="NCBIfam" id="NF033542">
    <property type="entry name" value="transpos_IS110"/>
    <property type="match status" value="1"/>
</dbReference>
<dbReference type="PANTHER" id="PTHR33055:SF3">
    <property type="entry name" value="PUTATIVE TRANSPOSASE FOR IS117-RELATED"/>
    <property type="match status" value="1"/>
</dbReference>
<dbReference type="PANTHER" id="PTHR33055">
    <property type="entry name" value="TRANSPOSASE FOR INSERTION SEQUENCE ELEMENT IS1111A"/>
    <property type="match status" value="1"/>
</dbReference>
<dbReference type="Pfam" id="PF01548">
    <property type="entry name" value="DEDD_Tnp_IS110"/>
    <property type="match status" value="1"/>
</dbReference>
<dbReference type="Pfam" id="PF02371">
    <property type="entry name" value="Transposase_20"/>
    <property type="match status" value="1"/>
</dbReference>
<feature type="chain" id="PRO_0000075456" description="Putative transposase y4qE">
    <location>
        <begin position="1"/>
        <end position="390"/>
    </location>
</feature>
<protein>
    <recommendedName>
        <fullName>Putative transposase y4qE</fullName>
    </recommendedName>
</protein>
<gene>
    <name type="ordered locus">NGR_a01930</name>
    <name type="ORF">y4qE</name>
</gene>
<evidence type="ECO:0000305" key="1"/>
<comment type="similarity">
    <text evidence="1">Belongs to the transposase IS1111A/IS1328/IS1533 family.</text>
</comment>
<accession>P55626</accession>
<organism>
    <name type="scientific">Sinorhizobium fredii (strain NBRC 101917 / NGR234)</name>
    <dbReference type="NCBI Taxonomy" id="394"/>
    <lineage>
        <taxon>Bacteria</taxon>
        <taxon>Pseudomonadati</taxon>
        <taxon>Pseudomonadota</taxon>
        <taxon>Alphaproteobacteria</taxon>
        <taxon>Hyphomicrobiales</taxon>
        <taxon>Rhizobiaceae</taxon>
        <taxon>Sinorhizobium/Ensifer group</taxon>
        <taxon>Sinorhizobium</taxon>
    </lineage>
</organism>